<proteinExistence type="inferred from homology"/>
<protein>
    <recommendedName>
        <fullName evidence="1">Cytochrome b6-f complex subunit 8</fullName>
    </recommendedName>
    <alternativeName>
        <fullName evidence="1">Cytochrome b6-f complex subunit PetN</fullName>
    </alternativeName>
    <alternativeName>
        <fullName evidence="1">Cytochrome b6-f complex subunit VIII</fullName>
    </alternativeName>
</protein>
<dbReference type="EMBL" id="AP006714">
    <property type="protein sequence ID" value="BAD27282.1"/>
    <property type="molecule type" value="Genomic_DNA"/>
</dbReference>
<dbReference type="RefSeq" id="YP_009389560.1">
    <property type="nucleotide sequence ID" value="NC_035224.1"/>
</dbReference>
<dbReference type="SMR" id="Q6ENX4"/>
<dbReference type="GeneID" id="33347820"/>
<dbReference type="GO" id="GO:0009535">
    <property type="term" value="C:chloroplast thylakoid membrane"/>
    <property type="evidence" value="ECO:0007669"/>
    <property type="project" value="UniProtKB-SubCell"/>
</dbReference>
<dbReference type="GO" id="GO:0009512">
    <property type="term" value="C:cytochrome b6f complex"/>
    <property type="evidence" value="ECO:0007669"/>
    <property type="project" value="InterPro"/>
</dbReference>
<dbReference type="GO" id="GO:0045158">
    <property type="term" value="F:electron transporter, transferring electrons within cytochrome b6/f complex of photosystem II activity"/>
    <property type="evidence" value="ECO:0007669"/>
    <property type="project" value="InterPro"/>
</dbReference>
<dbReference type="GO" id="GO:0017004">
    <property type="term" value="P:cytochrome complex assembly"/>
    <property type="evidence" value="ECO:0007669"/>
    <property type="project" value="UniProtKB-UniRule"/>
</dbReference>
<dbReference type="GO" id="GO:0015979">
    <property type="term" value="P:photosynthesis"/>
    <property type="evidence" value="ECO:0007669"/>
    <property type="project" value="UniProtKB-KW"/>
</dbReference>
<dbReference type="HAMAP" id="MF_00395">
    <property type="entry name" value="Cytb6_f_PetN"/>
    <property type="match status" value="1"/>
</dbReference>
<dbReference type="InterPro" id="IPR036143">
    <property type="entry name" value="Cytochr_b6-f_cplx_su8_sf"/>
</dbReference>
<dbReference type="InterPro" id="IPR005497">
    <property type="entry name" value="Cytochrome_b6-f_cplx_su8"/>
</dbReference>
<dbReference type="Pfam" id="PF03742">
    <property type="entry name" value="PetN"/>
    <property type="match status" value="1"/>
</dbReference>
<dbReference type="SUPFAM" id="SSF103451">
    <property type="entry name" value="PetN subunit of the cytochrome b6f complex"/>
    <property type="match status" value="1"/>
</dbReference>
<geneLocation type="chloroplast"/>
<sequence length="29" mass="3170">MDIVSLAWAALMVVFTFSLSLVVWGRSGL</sequence>
<evidence type="ECO:0000255" key="1">
    <source>
        <dbReference type="HAMAP-Rule" id="MF_00395"/>
    </source>
</evidence>
<keyword id="KW-0150">Chloroplast</keyword>
<keyword id="KW-0249">Electron transport</keyword>
<keyword id="KW-0472">Membrane</keyword>
<keyword id="KW-0602">Photosynthesis</keyword>
<keyword id="KW-0934">Plastid</keyword>
<keyword id="KW-0793">Thylakoid</keyword>
<keyword id="KW-0812">Transmembrane</keyword>
<keyword id="KW-1133">Transmembrane helix</keyword>
<keyword id="KW-0813">Transport</keyword>
<organism>
    <name type="scientific">Saccharum officinarum</name>
    <name type="common">Sugarcane</name>
    <dbReference type="NCBI Taxonomy" id="4547"/>
    <lineage>
        <taxon>Eukaryota</taxon>
        <taxon>Viridiplantae</taxon>
        <taxon>Streptophyta</taxon>
        <taxon>Embryophyta</taxon>
        <taxon>Tracheophyta</taxon>
        <taxon>Spermatophyta</taxon>
        <taxon>Magnoliopsida</taxon>
        <taxon>Liliopsida</taxon>
        <taxon>Poales</taxon>
        <taxon>Poaceae</taxon>
        <taxon>PACMAD clade</taxon>
        <taxon>Panicoideae</taxon>
        <taxon>Andropogonodae</taxon>
        <taxon>Andropogoneae</taxon>
        <taxon>Saccharinae</taxon>
        <taxon>Saccharum</taxon>
        <taxon>Saccharum officinarum species complex</taxon>
    </lineage>
</organism>
<reference key="1">
    <citation type="journal article" date="2004" name="DNA Res.">
        <title>Complete nucleotide sequence of the sugarcane (Saccharum officinarum) chloroplast genome: a comparative analysis of four monocot chloroplast genomes.</title>
        <authorList>
            <person name="Asano T."/>
            <person name="Tsudzuki T."/>
            <person name="Takahashi S."/>
            <person name="Shimada H."/>
            <person name="Kadowaki K."/>
        </authorList>
    </citation>
    <scope>NUCLEOTIDE SEQUENCE [LARGE SCALE GENOMIC DNA]</scope>
</reference>
<accession>Q6ENX4</accession>
<gene>
    <name evidence="1" type="primary">petN</name>
</gene>
<comment type="function">
    <text evidence="1">Component of the cytochrome b6-f complex, which mediates electron transfer between photosystem II (PSII) and photosystem I (PSI), cyclic electron flow around PSI, and state transitions.</text>
</comment>
<comment type="subunit">
    <text evidence="1">The 4 large subunits of the cytochrome b6-f complex are cytochrome b6, subunit IV (17 kDa polypeptide, PetD), cytochrome f and the Rieske protein, while the 4 small subunits are PetG, PetL, PetM and PetN. The complex functions as a dimer.</text>
</comment>
<comment type="subcellular location">
    <subcellularLocation>
        <location evidence="1">Plastid</location>
        <location evidence="1">Chloroplast thylakoid membrane</location>
        <topology evidence="1">Single-pass membrane protein</topology>
    </subcellularLocation>
</comment>
<comment type="similarity">
    <text evidence="1">Belongs to the PetN family.</text>
</comment>
<feature type="chain" id="PRO_0000217129" description="Cytochrome b6-f complex subunit 8">
    <location>
        <begin position="1"/>
        <end position="29"/>
    </location>
</feature>
<feature type="transmembrane region" description="Helical" evidence="1">
    <location>
        <begin position="3"/>
        <end position="23"/>
    </location>
</feature>
<name>PETN_SACOF</name>